<keyword id="KW-0002">3D-structure</keyword>
<keyword id="KW-0903">Direct protein sequencing</keyword>
<keyword id="KW-1015">Disulfide bond</keyword>
<keyword id="KW-0552">Olfaction</keyword>
<keyword id="KW-1185">Reference proteome</keyword>
<keyword id="KW-0964">Secreted</keyword>
<keyword id="KW-0716">Sensory transduction</keyword>
<keyword id="KW-0732">Signal</keyword>
<keyword id="KW-0813">Transport</keyword>
<organism>
    <name type="scientific">Rattus norvegicus</name>
    <name type="common">Rat</name>
    <dbReference type="NCBI Taxonomy" id="10116"/>
    <lineage>
        <taxon>Eukaryota</taxon>
        <taxon>Metazoa</taxon>
        <taxon>Chordata</taxon>
        <taxon>Craniata</taxon>
        <taxon>Vertebrata</taxon>
        <taxon>Euteleostomi</taxon>
        <taxon>Mammalia</taxon>
        <taxon>Eutheria</taxon>
        <taxon>Euarchontoglires</taxon>
        <taxon>Glires</taxon>
        <taxon>Rodentia</taxon>
        <taxon>Myomorpha</taxon>
        <taxon>Muroidea</taxon>
        <taxon>Muridae</taxon>
        <taxon>Murinae</taxon>
        <taxon>Rattus</taxon>
    </lineage>
</organism>
<dbReference type="EMBL" id="J03093">
    <property type="protein sequence ID" value="AAA41736.1"/>
    <property type="molecule type" value="mRNA"/>
</dbReference>
<dbReference type="PIR" id="A28713">
    <property type="entry name" value="A28713"/>
</dbReference>
<dbReference type="RefSeq" id="NP_620258.1">
    <property type="nucleotide sequence ID" value="NM_138903.1"/>
</dbReference>
<dbReference type="PDB" id="3FIQ">
    <property type="method" value="X-ray"/>
    <property type="resolution" value="1.60 A"/>
    <property type="chains" value="A/B=17-172"/>
</dbReference>
<dbReference type="PDBsum" id="3FIQ"/>
<dbReference type="SMR" id="P08937"/>
<dbReference type="STRING" id="10116.ENSRNOP00000064887"/>
<dbReference type="PaxDb" id="10116-ENSRNOP00000064887"/>
<dbReference type="GeneID" id="192267"/>
<dbReference type="KEGG" id="rno:192267"/>
<dbReference type="AGR" id="RGD:11461170"/>
<dbReference type="AGR" id="RGD:621639"/>
<dbReference type="CTD" id="192267"/>
<dbReference type="RGD" id="621639">
    <property type="gene designation" value="Obp1f"/>
</dbReference>
<dbReference type="VEuPathDB" id="HostDB:ENSRNOG00000062551"/>
<dbReference type="eggNOG" id="ENOG502TDZD">
    <property type="taxonomic scope" value="Eukaryota"/>
</dbReference>
<dbReference type="HOGENOM" id="CLU_094061_4_2_1"/>
<dbReference type="InParanoid" id="P08937"/>
<dbReference type="TreeFam" id="TF338197"/>
<dbReference type="EvolutionaryTrace" id="P08937"/>
<dbReference type="PRO" id="PR:P08937"/>
<dbReference type="Proteomes" id="UP000002494">
    <property type="component" value="Chromosome X"/>
</dbReference>
<dbReference type="Bgee" id="ENSRNOG00000049515">
    <property type="expression patterns" value="Expressed in liver and 2 other cell types or tissues"/>
</dbReference>
<dbReference type="GO" id="GO:0005615">
    <property type="term" value="C:extracellular space"/>
    <property type="evidence" value="ECO:0000318"/>
    <property type="project" value="GO_Central"/>
</dbReference>
<dbReference type="GO" id="GO:0005549">
    <property type="term" value="F:odorant binding"/>
    <property type="evidence" value="ECO:0000314"/>
    <property type="project" value="RGD"/>
</dbReference>
<dbReference type="GO" id="GO:0036094">
    <property type="term" value="F:small molecule binding"/>
    <property type="evidence" value="ECO:0007669"/>
    <property type="project" value="InterPro"/>
</dbReference>
<dbReference type="GO" id="GO:0007608">
    <property type="term" value="P:sensory perception of smell"/>
    <property type="evidence" value="ECO:0007669"/>
    <property type="project" value="UniProtKB-KW"/>
</dbReference>
<dbReference type="CDD" id="cd19427">
    <property type="entry name" value="lipocalin_OBP-like"/>
    <property type="match status" value="1"/>
</dbReference>
<dbReference type="FunFam" id="2.40.128.20:FF:000008">
    <property type="entry name" value="Major urinary protein"/>
    <property type="match status" value="1"/>
</dbReference>
<dbReference type="Gene3D" id="2.40.128.20">
    <property type="match status" value="1"/>
</dbReference>
<dbReference type="InterPro" id="IPR012674">
    <property type="entry name" value="Calycin"/>
</dbReference>
<dbReference type="InterPro" id="IPR002345">
    <property type="entry name" value="Lipocalin"/>
</dbReference>
<dbReference type="InterPro" id="IPR022272">
    <property type="entry name" value="Lipocalin_CS"/>
</dbReference>
<dbReference type="InterPro" id="IPR000566">
    <property type="entry name" value="Lipocln_cytosolic_FA-bd_dom"/>
</dbReference>
<dbReference type="InterPro" id="IPR002448">
    <property type="entry name" value="OBP-like"/>
</dbReference>
<dbReference type="PANTHER" id="PTHR11430">
    <property type="entry name" value="LIPOCALIN"/>
    <property type="match status" value="1"/>
</dbReference>
<dbReference type="PANTHER" id="PTHR11430:SF65">
    <property type="entry name" value="ODORANT-BINDING PROTEIN 1A-RELATED"/>
    <property type="match status" value="1"/>
</dbReference>
<dbReference type="Pfam" id="PF00061">
    <property type="entry name" value="Lipocalin"/>
    <property type="match status" value="1"/>
</dbReference>
<dbReference type="PRINTS" id="PR01173">
    <property type="entry name" value="ODORANTBNDNG"/>
</dbReference>
<dbReference type="SUPFAM" id="SSF50814">
    <property type="entry name" value="Lipocalins"/>
    <property type="match status" value="1"/>
</dbReference>
<dbReference type="PROSITE" id="PS00213">
    <property type="entry name" value="LIPOCALIN"/>
    <property type="match status" value="1"/>
</dbReference>
<reference key="1">
    <citation type="journal article" date="1988" name="Science">
        <title>Molecular cloning of odorant-binding protein: member of a ligand carrier family.</title>
        <authorList>
            <person name="Pevsner J."/>
            <person name="Reed R.R."/>
            <person name="Feinstein P.G."/>
            <person name="Snyder S.H."/>
        </authorList>
    </citation>
    <scope>NUCLEOTIDE SEQUENCE [MRNA]</scope>
    <scope>PROTEIN SEQUENCE OF 16-31</scope>
</reference>
<reference key="2">
    <citation type="journal article" date="2009" name="Acta Crystallogr. D">
        <title>Structure of rat odorant-binding protein OBP1 at 1.6 A resolution.</title>
        <authorList>
            <person name="White S.A."/>
            <person name="Briand L."/>
            <person name="Scott D.J."/>
            <person name="Borysik A.J."/>
        </authorList>
    </citation>
    <scope>X-RAY CRYSTALLOGRAPHY (1.6 ANGSTROMS) OF 17-172</scope>
    <scope>DISULFIDE BONDS</scope>
</reference>
<protein>
    <recommendedName>
        <fullName>Odorant-binding protein</fullName>
        <shortName>OBP</shortName>
    </recommendedName>
</protein>
<name>OBP_RAT</name>
<evidence type="ECO:0000269" key="1">
    <source>
    </source>
</evidence>
<evidence type="ECO:0000269" key="2">
    <source>
    </source>
</evidence>
<evidence type="ECO:0000305" key="3"/>
<evidence type="ECO:0007829" key="4">
    <source>
        <dbReference type="PDB" id="3FIQ"/>
    </source>
</evidence>
<gene>
    <name type="primary">Obp1f</name>
</gene>
<proteinExistence type="evidence at protein level"/>
<comment type="function">
    <text>This protein is found in nasal epithelium and it binds a wide variety of chemical odorants.</text>
</comment>
<comment type="subunit">
    <text>Homodimer.</text>
</comment>
<comment type="subcellular location">
    <subcellularLocation>
        <location>Secreted</location>
    </subcellularLocation>
</comment>
<comment type="similarity">
    <text evidence="3">Belongs to the calycin superfamily. Lipocalin family.</text>
</comment>
<sequence>MVKFLLIVLALGVSCAHHENLDISPSEVNGDWRTLYIVADNVEKVAEGGSLRAYFQHMECGDECQELKIIFNVKLDSECQTHTVVGQKHEDGRYTTDYSGRNYFHVLKKTDDIIFFHNVNVDESGRRQCDLVAGKREDLNKAQKQELRKLAEEYNIPNENTQHLVPTDTCNQ</sequence>
<feature type="signal peptide" evidence="2">
    <location>
        <begin position="1"/>
        <end position="15"/>
    </location>
</feature>
<feature type="chain" id="PRO_0000017936" description="Odorant-binding protein">
    <location>
        <begin position="16"/>
        <end position="172"/>
    </location>
</feature>
<feature type="disulfide bond" evidence="1">
    <location>
        <begin position="60"/>
        <end position="64"/>
    </location>
</feature>
<feature type="disulfide bond" evidence="1">
    <location>
        <begin position="79"/>
        <end position="170"/>
    </location>
</feature>
<feature type="helix" evidence="4">
    <location>
        <begin position="25"/>
        <end position="28"/>
    </location>
</feature>
<feature type="strand" evidence="4">
    <location>
        <begin position="33"/>
        <end position="41"/>
    </location>
</feature>
<feature type="helix" evidence="4">
    <location>
        <begin position="42"/>
        <end position="44"/>
    </location>
</feature>
<feature type="strand" evidence="4">
    <location>
        <begin position="54"/>
        <end position="60"/>
    </location>
</feature>
<feature type="helix" evidence="4">
    <location>
        <begin position="62"/>
        <end position="64"/>
    </location>
</feature>
<feature type="strand" evidence="4">
    <location>
        <begin position="66"/>
        <end position="75"/>
    </location>
</feature>
<feature type="strand" evidence="4">
    <location>
        <begin position="78"/>
        <end position="88"/>
    </location>
</feature>
<feature type="strand" evidence="4">
    <location>
        <begin position="94"/>
        <end position="109"/>
    </location>
</feature>
<feature type="strand" evidence="4">
    <location>
        <begin position="111"/>
        <end position="121"/>
    </location>
</feature>
<feature type="strand" evidence="4">
    <location>
        <begin position="127"/>
        <end position="137"/>
    </location>
</feature>
<feature type="helix" evidence="4">
    <location>
        <begin position="141"/>
        <end position="153"/>
    </location>
</feature>
<feature type="helix" evidence="4">
    <location>
        <begin position="158"/>
        <end position="160"/>
    </location>
</feature>
<feature type="helix" evidence="4">
    <location>
        <begin position="165"/>
        <end position="167"/>
    </location>
</feature>
<accession>P08937</accession>